<accession>P50580</accession>
<reference key="1">
    <citation type="journal article" date="1995" name="Exp. Cell Res.">
        <title>Molecular cloning of a murine cDNA encoding a novel protein, p38-2G4, which varies with the cell cycle.</title>
        <authorList>
            <person name="Radomski N."/>
            <person name="Jost E."/>
        </authorList>
    </citation>
    <scope>NUCLEOTIDE SEQUENCE [MRNA] (ISOFORM 2)</scope>
    <scope>INDUCTION</scope>
    <scope>SUBCELLULAR LOCATION</scope>
    <source>
        <strain>NFS</strain>
    </source>
</reference>
<reference key="2">
    <citation type="journal article" date="1997" name="Acta Med. Okayama">
        <title>cDNA cloning, sequence analysis and expression of a mouse 44-kDa nuclear protein copurified with DNA repair factors for acid-depurinated DNA.</title>
        <authorList>
            <person name="Nakagawa Y."/>
            <person name="Watanabe S."/>
            <person name="Akiyama K."/>
            <person name="Sarker A.H."/>
            <person name="Tsutsui K."/>
            <person name="Inoue H."/>
            <person name="Seki S."/>
        </authorList>
    </citation>
    <scope>NUCLEOTIDE SEQUENCE [MRNA] (ISOFORM 1)</scope>
    <source>
        <strain>NFS</strain>
    </source>
</reference>
<reference key="3">
    <citation type="journal article" date="2004" name="Genome Res.">
        <title>The status, quality, and expansion of the NIH full-length cDNA project: the Mammalian Gene Collection (MGC).</title>
        <authorList>
            <consortium name="The MGC Project Team"/>
        </authorList>
    </citation>
    <scope>NUCLEOTIDE SEQUENCE [LARGE SCALE MRNA] (ISOFORM 1)</scope>
    <source>
        <tissue>Eye</tissue>
    </source>
</reference>
<reference key="4">
    <citation type="journal article" date="2000" name="Genes Dev.">
        <title>A cell cycle-dependent protein serves as a template-specific translation initiation factor.</title>
        <authorList>
            <person name="Pilipenko E.V."/>
            <person name="Pestova T.V."/>
            <person name="Kolupaeva V.G."/>
            <person name="Khitrina E.V."/>
            <person name="Poperechnaya A.N."/>
            <person name="Agol V.I."/>
            <person name="Hellen C.U."/>
        </authorList>
    </citation>
    <scope>NUCLEOTIDE SEQUENCE [MRNA] (ISOFORM 1)</scope>
    <scope>RNA-BINDING</scope>
    <scope>FUNCTION IN VIRAL TRANSLATION</scope>
</reference>
<reference key="5">
    <citation type="journal article" date="2004" name="Oncogene">
        <title>EBP1 is a nucleolar growth-regulating protein that is part of pre-ribosomal ribonucleoprotein complexes.</title>
        <authorList>
            <person name="Squatrito M."/>
            <person name="Mancino M."/>
            <person name="Donzelli M."/>
            <person name="Areces L.B."/>
            <person name="Draetta G.F."/>
        </authorList>
    </citation>
    <scope>TISSUE SPECIFICITY</scope>
    <scope>DEVELOPMENTAL STAGE</scope>
</reference>
<reference key="6">
    <citation type="journal article" date="2006" name="Mol. Cell. Proteomics">
        <title>Comprehensive identification of phosphorylation sites in postsynaptic density preparations.</title>
        <authorList>
            <person name="Trinidad J.C."/>
            <person name="Specht C.G."/>
            <person name="Thalhammer A."/>
            <person name="Schoepfer R."/>
            <person name="Burlingame A.L."/>
        </authorList>
    </citation>
    <scope>PHOSPHORYLATION [LARGE SCALE ANALYSIS] AT SER-2</scope>
    <scope>IDENTIFICATION BY MASS SPECTROMETRY [LARGE SCALE ANALYSIS]</scope>
    <source>
        <tissue>Brain</tissue>
    </source>
</reference>
<reference key="7">
    <citation type="journal article" date="2010" name="Cell">
        <title>A tissue-specific atlas of mouse protein phosphorylation and expression.</title>
        <authorList>
            <person name="Huttlin E.L."/>
            <person name="Jedrychowski M.P."/>
            <person name="Elias J.E."/>
            <person name="Goswami T."/>
            <person name="Rad R."/>
            <person name="Beausoleil S.A."/>
            <person name="Villen J."/>
            <person name="Haas W."/>
            <person name="Sowa M.E."/>
            <person name="Gygi S.P."/>
        </authorList>
    </citation>
    <scope>IDENTIFICATION BY MASS SPECTROMETRY [LARGE SCALE ANALYSIS]</scope>
    <source>
        <tissue>Brain</tissue>
        <tissue>Brown adipose tissue</tissue>
        <tissue>Heart</tissue>
        <tissue>Kidney</tissue>
        <tissue>Liver</tissue>
        <tissue>Lung</tissue>
        <tissue>Pancreas</tissue>
        <tissue>Spleen</tissue>
        <tissue>Testis</tissue>
    </source>
</reference>
<reference key="8">
    <citation type="journal article" date="2007" name="EMBO J.">
        <title>Structural insights into the transcriptional and translational roles of Ebp1.</title>
        <authorList>
            <person name="Monie T.P."/>
            <person name="Perrin A.J."/>
            <person name="Birtley J.R."/>
            <person name="Sweeney T.R."/>
            <person name="Karakasiliotis I."/>
            <person name="Chaudhry Y."/>
            <person name="Roberts L.O."/>
            <person name="Matthews S."/>
            <person name="Goodfellow I.G."/>
            <person name="Curry S."/>
        </authorList>
    </citation>
    <scope>X-RAY CRYSTALLOGRAPHY (2.5 ANGSTROMS) OF 8-360</scope>
    <scope>ABSENCE OF AMINOPEPTIDASE ACTIVITY</scope>
    <scope>FUNCTION</scope>
    <scope>MUTAGENESIS OF 65-LYS--LYS-72</scope>
    <scope>INTERACTION WITH RNA</scope>
</reference>
<evidence type="ECO:0000250" key="1">
    <source>
        <dbReference type="UniProtKB" id="Q6AYD3"/>
    </source>
</evidence>
<evidence type="ECO:0000250" key="2">
    <source>
        <dbReference type="UniProtKB" id="Q9UQ80"/>
    </source>
</evidence>
<evidence type="ECO:0000256" key="3">
    <source>
        <dbReference type="SAM" id="MobiDB-lite"/>
    </source>
</evidence>
<evidence type="ECO:0000269" key="4">
    <source>
    </source>
</evidence>
<evidence type="ECO:0000269" key="5">
    <source>
    </source>
</evidence>
<evidence type="ECO:0000269" key="6">
    <source>
    </source>
</evidence>
<evidence type="ECO:0000269" key="7">
    <source>
    </source>
</evidence>
<evidence type="ECO:0000305" key="8"/>
<evidence type="ECO:0000305" key="9">
    <source>
    </source>
</evidence>
<evidence type="ECO:0000305" key="10">
    <source>
    </source>
</evidence>
<evidence type="ECO:0007744" key="11">
    <source>
    </source>
</evidence>
<evidence type="ECO:0007829" key="12">
    <source>
        <dbReference type="PDB" id="2V6C"/>
    </source>
</evidence>
<keyword id="KW-0002">3D-structure</keyword>
<keyword id="KW-0007">Acetylation</keyword>
<keyword id="KW-0025">Alternative splicing</keyword>
<keyword id="KW-0963">Cytoplasm</keyword>
<keyword id="KW-1017">Isopeptide bond</keyword>
<keyword id="KW-0539">Nucleus</keyword>
<keyword id="KW-0597">Phosphoprotein</keyword>
<keyword id="KW-1185">Reference proteome</keyword>
<keyword id="KW-0678">Repressor</keyword>
<keyword id="KW-0687">Ribonucleoprotein</keyword>
<keyword id="KW-0694">RNA-binding</keyword>
<keyword id="KW-0698">rRNA processing</keyword>
<keyword id="KW-0804">Transcription</keyword>
<keyword id="KW-0805">Transcription regulation</keyword>
<keyword id="KW-0810">Translation regulation</keyword>
<keyword id="KW-0832">Ubl conjugation</keyword>
<protein>
    <recommendedName>
        <fullName>Proliferation-associated protein 2G4</fullName>
    </recommendedName>
    <alternativeName>
        <fullName>IRES-specific cellular trans-acting factor 45 kDa</fullName>
        <shortName>ITAF45</shortName>
    </alternativeName>
    <alternativeName>
        <fullName>Mpp1</fullName>
    </alternativeName>
    <alternativeName>
        <fullName>Proliferation-associated protein 1</fullName>
    </alternativeName>
    <alternativeName>
        <fullName>Protein p38-2G4</fullName>
    </alternativeName>
</protein>
<sequence>MSGEDEQQEQTIAEDLVVTKYKMGGDIANRVLRSLVEASSSGVSVLSLCEKGDAMIMEETGKIFKKEKEMKKGIAFPTSISVNNCVCHFSPLKSDQDYILKEGDLVKIDLGVHVDGFIANVAHTFVIGVAQGTQVTGRKADVIKAAHLCAEAALRLVKPGNQNTQVTEAWNKVAHSFNCTPIEGMLSHQLKQHVIDGEKTIIQNPTDQQKKDHEKAEFEVHEVYAVDVLVSSGEGKAKDAGQRTTIYKRDPSKQYGLKMKTSRAFFSEVERRFDAMPFTLRAFEDEKKARMGVVECAKHELLQPFNVLYEKEGEFVAQFKFTVLLMPNGPMRITSGPFEPDLYKSEMEVQDAELKALLQSSASRKTQKKKKKKASKTVENATSGETLEENGAGD</sequence>
<comment type="function">
    <text evidence="1 2 4 6">May play a role in a ERBB3-regulated signal transduction pathway. Seems be involved in growth regulation. Acts a corepressor of the androgen receptor (AR) and is regulated by the ERBB3 ligand neuregulin-1/heregulin (HRG). Inhibits transcription of some E2F1-regulated promoters, probably by recruiting histone acetylase (HAT) activity. Binds RNA. Associates with 28S, 18S and 5.8S mature rRNAs, several rRNA precursors and probably U3 small nucleolar RNA. May be involved in regulation of intermediate and late steps of rRNA processing. May be involved in ribosome assembly (By similarity). Mediates cap-independent translation of specific viral IRESs (internal ribosomal entry site). Together with PTBP1 is required for the translation initiation on the foot-and-mouth disease virus (FMDV) IRES. Regulates cell proliferation, differentiation, and survival. Isoform 1 suppresses apoptosis whereas isoform 2 promotes cell differentiation (By similarity).</text>
</comment>
<comment type="subunit">
    <text evidence="1 2">Isoform 2 interacts with the cytoplasmic domain of non-phosphorylated ERBB3; the interaction requires PKC activity. Interacts with AR. Treatment with HRG leads to dissociation from ERBB3 and increases association with AR. Interacts with nucleolin/NCL. Component of a ribonucleoprotein complex containing at least PA2G4, NCL, TOP1, PABPC2, RPLP0, acetylated histone H1 (HIST1H1A or H1F1), histone H1 2/4, RPL4, RPL8, RPL15, RPL18, RPL18A, RPL21, RPL11, RPL12, RPL28, RPL27, RPLP2 and RPL24. Interacts with HDAC2. Interacts with RB1; the interaction is enhanced upon PA2G4 dephosphorylation (By similarity). Interacts with AKT1 (By similarity). Isoform 1 and isoform 2 interact with RNF20 (By similarity). Isoform 2 interacts with HUWE1. Interacts with DNAJC21 (By similarity).</text>
</comment>
<comment type="subcellular location">
    <molecule>Isoform 1</molecule>
    <subcellularLocation>
        <location evidence="2">Cytoplasm</location>
    </subcellularLocation>
    <subcellularLocation>
        <location evidence="2">Nucleus</location>
        <location evidence="2">Nucleolus</location>
    </subcellularLocation>
    <text evidence="2">Phosphorylation at Ser-361 by PKC/PRKCD regulates its nucleolar localization.</text>
</comment>
<comment type="subcellular location">
    <molecule>Isoform 2</molecule>
    <subcellularLocation>
        <location evidence="7">Cytoplasm</location>
    </subcellularLocation>
</comment>
<comment type="alternative products">
    <event type="alternative splicing"/>
    <isoform>
        <id>P50580-1</id>
        <name evidence="8">1</name>
        <sequence type="displayed"/>
    </isoform>
    <isoform>
        <id>P50580-2</id>
        <name evidence="8">2</name>
        <sequence type="described" ref="VSP_057326"/>
    </isoform>
</comment>
<comment type="tissue specificity">
    <text evidence="5">Widely expressed.</text>
</comment>
<comment type="developmental stage">
    <text evidence="5">Expressed in proliferating cells. Observed between G1 and mid S phase, decrease toward the end of S phase, and disappear at the S/G2 transition.</text>
</comment>
<comment type="induction">
    <text evidence="7">By mitogens.</text>
</comment>
<comment type="PTM">
    <text evidence="2">Phosphorylated on serine and threonine residues. Phosphorylation is enhanced by HRG treatment. Basal phosphorylation is PKC-dependent and HRG-induced phosphorylation is predominantly PKC-independent. Phosphorylation at Ser-361 by PKC/PRKCD regulates its nucleolar localization.</text>
</comment>
<comment type="PTM">
    <text evidence="2">Isoform 2 is polyubiquitinated, leading to proteasomal degradation and phosphorylation by PKC/PRKCD enhances polyubiquitination.</text>
</comment>
<comment type="similarity">
    <text evidence="8">Belongs to the peptidase M24 family.</text>
</comment>
<comment type="caution">
    <text evidence="9">Although it belongs to the peptidase M24 family, it does not contain metal cofactors and lacks aminopeptidase activity.</text>
</comment>
<feature type="initiator methionine" description="Removed" evidence="2">
    <location>
        <position position="1"/>
    </location>
</feature>
<feature type="chain" id="PRO_0000148990" description="Proliferation-associated protein 2G4">
    <location>
        <begin position="2"/>
        <end position="394"/>
    </location>
</feature>
<feature type="region of interest" description="Necessary for nucleolar localization" evidence="2">
    <location>
        <begin position="2"/>
        <end position="48"/>
    </location>
</feature>
<feature type="region of interest" description="RNA-binding" evidence="2">
    <location>
        <begin position="46"/>
        <end position="54"/>
    </location>
</feature>
<feature type="region of interest" description="Necessary for nucleolar localization" evidence="2">
    <location>
        <begin position="301"/>
        <end position="394"/>
    </location>
</feature>
<feature type="region of interest" description="Disordered" evidence="3">
    <location>
        <begin position="358"/>
        <end position="394"/>
    </location>
</feature>
<feature type="region of interest" description="Interaction with RNA" evidence="6">
    <location>
        <begin position="361"/>
        <end position="375"/>
    </location>
</feature>
<feature type="compositionally biased region" description="Basic residues" evidence="3">
    <location>
        <begin position="365"/>
        <end position="375"/>
    </location>
</feature>
<feature type="modified residue" description="N-acetylserine" evidence="2">
    <location>
        <position position="2"/>
    </location>
</feature>
<feature type="modified residue" description="Phosphoserine" evidence="11">
    <location>
        <position position="2"/>
    </location>
</feature>
<feature type="modified residue" description="Phosphoserine" evidence="2">
    <location>
        <position position="335"/>
    </location>
</feature>
<feature type="modified residue" description="Phosphoserine; by PKC/PRKCD" evidence="2">
    <location>
        <position position="361"/>
    </location>
</feature>
<feature type="modified residue" description="Phosphothreonine" evidence="2">
    <location>
        <position position="366"/>
    </location>
</feature>
<feature type="modified residue" description="Phosphothreonine" evidence="2">
    <location>
        <position position="386"/>
    </location>
</feature>
<feature type="cross-link" description="Glycyl lysine isopeptide (Lys-Gly) (interchain with G-Cter in SUMO2)" evidence="2">
    <location>
        <position position="298"/>
    </location>
</feature>
<feature type="splice variant" id="VSP_057326" description="In isoform 2." evidence="10">
    <location>
        <begin position="1"/>
        <end position="54"/>
    </location>
</feature>
<feature type="mutagenesis site" description="No effect on RNA-binding." evidence="6">
    <original>KKEKEMKK</original>
    <variation>SSSSSSSS</variation>
    <location>
        <begin position="65"/>
        <end position="72"/>
    </location>
</feature>
<feature type="sequence conflict" description="In Ref. 4; no nucleotide entry." evidence="8" ref="4">
    <original>T</original>
    <variation>A</variation>
    <location>
        <position position="279"/>
    </location>
</feature>
<feature type="sequence conflict" description="In Ref. 4; no nucleotide entry." evidence="8" ref="4">
    <original>K</original>
    <variation>R</variation>
    <location>
        <position position="311"/>
    </location>
</feature>
<feature type="helix" evidence="12">
    <location>
        <begin position="15"/>
        <end position="36"/>
    </location>
</feature>
<feature type="helix" evidence="12">
    <location>
        <begin position="45"/>
        <end position="60"/>
    </location>
</feature>
<feature type="strand" evidence="12">
    <location>
        <begin position="72"/>
        <end position="82"/>
    </location>
</feature>
<feature type="strand" evidence="12">
    <location>
        <begin position="85"/>
        <end position="87"/>
    </location>
</feature>
<feature type="strand" evidence="12">
    <location>
        <begin position="93"/>
        <end position="95"/>
    </location>
</feature>
<feature type="strand" evidence="12">
    <location>
        <begin position="105"/>
        <end position="114"/>
    </location>
</feature>
<feature type="strand" evidence="12">
    <location>
        <begin position="117"/>
        <end position="126"/>
    </location>
</feature>
<feature type="helix" evidence="12">
    <location>
        <begin position="138"/>
        <end position="156"/>
    </location>
</feature>
<feature type="helix" evidence="12">
    <location>
        <begin position="163"/>
        <end position="176"/>
    </location>
</feature>
<feature type="strand" evidence="12">
    <location>
        <begin position="186"/>
        <end position="189"/>
    </location>
</feature>
<feature type="strand" evidence="12">
    <location>
        <begin position="194"/>
        <end position="196"/>
    </location>
</feature>
<feature type="strand" evidence="12">
    <location>
        <begin position="198"/>
        <end position="204"/>
    </location>
</feature>
<feature type="helix" evidence="12">
    <location>
        <begin position="207"/>
        <end position="212"/>
    </location>
</feature>
<feature type="strand" evidence="12">
    <location>
        <begin position="223"/>
        <end position="233"/>
    </location>
</feature>
<feature type="strand" evidence="12">
    <location>
        <begin position="246"/>
        <end position="249"/>
    </location>
</feature>
<feature type="helix" evidence="12">
    <location>
        <begin position="260"/>
        <end position="272"/>
    </location>
</feature>
<feature type="turn" evidence="12">
    <location>
        <begin position="273"/>
        <end position="275"/>
    </location>
</feature>
<feature type="helix" evidence="12">
    <location>
        <begin position="280"/>
        <end position="282"/>
    </location>
</feature>
<feature type="helix" evidence="12">
    <location>
        <begin position="286"/>
        <end position="298"/>
    </location>
</feature>
<feature type="strand" evidence="12">
    <location>
        <begin position="301"/>
        <end position="305"/>
    </location>
</feature>
<feature type="strand" evidence="12">
    <location>
        <begin position="316"/>
        <end position="326"/>
    </location>
</feature>
<feature type="strand" evidence="12">
    <location>
        <begin position="329"/>
        <end position="332"/>
    </location>
</feature>
<feature type="helix" evidence="12">
    <location>
        <begin position="340"/>
        <end position="342"/>
    </location>
</feature>
<feature type="helix" evidence="12">
    <location>
        <begin position="352"/>
        <end position="357"/>
    </location>
</feature>
<gene>
    <name type="primary">Pa2g4</name>
    <name type="synonym">Ebp1</name>
    <name type="synonym">Plfap</name>
</gene>
<dbReference type="EMBL" id="X84789">
    <property type="protein sequence ID" value="CAA59260.1"/>
    <property type="molecule type" value="mRNA"/>
</dbReference>
<dbReference type="EMBL" id="U43918">
    <property type="protein sequence ID" value="AAB60513.1"/>
    <property type="molecule type" value="mRNA"/>
</dbReference>
<dbReference type="EMBL" id="BC046532">
    <property type="protein sequence ID" value="AAH46532.1"/>
    <property type="molecule type" value="mRNA"/>
</dbReference>
<dbReference type="CCDS" id="CCDS24282.1">
    <molecule id="P50580-1"/>
</dbReference>
<dbReference type="PIR" id="I48702">
    <property type="entry name" value="S54181"/>
</dbReference>
<dbReference type="RefSeq" id="NP_035249.1">
    <molecule id="P50580-1"/>
    <property type="nucleotide sequence ID" value="NM_011119.3"/>
</dbReference>
<dbReference type="PDB" id="2V6C">
    <property type="method" value="X-ray"/>
    <property type="resolution" value="2.50 A"/>
    <property type="chains" value="A=9-360"/>
</dbReference>
<dbReference type="PDB" id="6SWA">
    <property type="method" value="EM"/>
    <property type="resolution" value="3.10 A"/>
    <property type="chains" value="t=1-394"/>
</dbReference>
<dbReference type="PDBsum" id="2V6C"/>
<dbReference type="PDBsum" id="6SWA"/>
<dbReference type="EMDB" id="EMD-10321"/>
<dbReference type="SMR" id="P50580"/>
<dbReference type="BioGRID" id="202246">
    <property type="interactions" value="29"/>
</dbReference>
<dbReference type="FunCoup" id="P50580">
    <property type="interactions" value="4327"/>
</dbReference>
<dbReference type="IntAct" id="P50580">
    <property type="interactions" value="3"/>
</dbReference>
<dbReference type="MINT" id="P50580"/>
<dbReference type="STRING" id="10090.ENSMUSP00000114434"/>
<dbReference type="MEROPS" id="M24.978"/>
<dbReference type="GlyGen" id="P50580">
    <property type="glycosylation" value="1 site, 1 O-linked glycan (1 site)"/>
</dbReference>
<dbReference type="iPTMnet" id="P50580"/>
<dbReference type="PhosphoSitePlus" id="P50580"/>
<dbReference type="SwissPalm" id="P50580"/>
<dbReference type="jPOST" id="P50580"/>
<dbReference type="PaxDb" id="10090-ENSMUSP00000026425"/>
<dbReference type="PeptideAtlas" id="P50580"/>
<dbReference type="ProteomicsDB" id="295450">
    <molecule id="P50580-1"/>
</dbReference>
<dbReference type="ProteomicsDB" id="295451">
    <molecule id="P50580-2"/>
</dbReference>
<dbReference type="Pumba" id="P50580"/>
<dbReference type="DNASU" id="18813"/>
<dbReference type="Ensembl" id="ENSMUST00000026425.13">
    <molecule id="P50580-1"/>
    <property type="protein sequence ID" value="ENSMUSP00000026425.7"/>
    <property type="gene ID" value="ENSMUSG00000025364.14"/>
</dbReference>
<dbReference type="Ensembl" id="ENSMUST00000131728.4">
    <molecule id="P50580-1"/>
    <property type="protein sequence ID" value="ENSMUSP00000114434.3"/>
    <property type="gene ID" value="ENSMUSG00000025364.14"/>
</dbReference>
<dbReference type="GeneID" id="18813"/>
<dbReference type="KEGG" id="mmu:18813"/>
<dbReference type="UCSC" id="uc007hnl.1">
    <molecule id="P50580-1"/>
    <property type="organism name" value="mouse"/>
</dbReference>
<dbReference type="AGR" id="MGI:894684"/>
<dbReference type="CTD" id="5036"/>
<dbReference type="MGI" id="MGI:894684">
    <property type="gene designation" value="Pa2g4"/>
</dbReference>
<dbReference type="VEuPathDB" id="HostDB:ENSMUSG00000025364"/>
<dbReference type="eggNOG" id="KOG2776">
    <property type="taxonomic scope" value="Eukaryota"/>
</dbReference>
<dbReference type="GeneTree" id="ENSGT00940000154281"/>
<dbReference type="HOGENOM" id="CLU_041451_2_1_1"/>
<dbReference type="InParanoid" id="P50580"/>
<dbReference type="OMA" id="MAIQECA"/>
<dbReference type="OrthoDB" id="5876363at2759"/>
<dbReference type="PhylomeDB" id="P50580"/>
<dbReference type="TreeFam" id="TF300010"/>
<dbReference type="Reactome" id="R-MMU-6798695">
    <property type="pathway name" value="Neutrophil degranulation"/>
</dbReference>
<dbReference type="BioGRID-ORCS" id="18813">
    <property type="hits" value="18 hits in 82 CRISPR screens"/>
</dbReference>
<dbReference type="CD-CODE" id="CE726F99">
    <property type="entry name" value="Postsynaptic density"/>
</dbReference>
<dbReference type="ChiTaRS" id="Pa2g4">
    <property type="organism name" value="mouse"/>
</dbReference>
<dbReference type="EvolutionaryTrace" id="P50580"/>
<dbReference type="PRO" id="PR:P50580"/>
<dbReference type="Proteomes" id="UP000000589">
    <property type="component" value="Chromosome 10"/>
</dbReference>
<dbReference type="RNAct" id="P50580">
    <property type="molecule type" value="protein"/>
</dbReference>
<dbReference type="Bgee" id="ENSMUSG00000025364">
    <property type="expression patterns" value="Expressed in embryonic post-anal tail and 254 other cell types or tissues"/>
</dbReference>
<dbReference type="ExpressionAtlas" id="P50580">
    <property type="expression patterns" value="baseline and differential"/>
</dbReference>
<dbReference type="GO" id="GO:0005737">
    <property type="term" value="C:cytoplasm"/>
    <property type="evidence" value="ECO:0000250"/>
    <property type="project" value="UniProtKB"/>
</dbReference>
<dbReference type="GO" id="GO:0005730">
    <property type="term" value="C:nucleolus"/>
    <property type="evidence" value="ECO:0000250"/>
    <property type="project" value="UniProtKB"/>
</dbReference>
<dbReference type="GO" id="GO:0005634">
    <property type="term" value="C:nucleus"/>
    <property type="evidence" value="ECO:0000266"/>
    <property type="project" value="MGI"/>
</dbReference>
<dbReference type="GO" id="GO:1990904">
    <property type="term" value="C:ribonucleoprotein complex"/>
    <property type="evidence" value="ECO:0000266"/>
    <property type="project" value="MGI"/>
</dbReference>
<dbReference type="GO" id="GO:0003676">
    <property type="term" value="F:nucleic acid binding"/>
    <property type="evidence" value="ECO:0000266"/>
    <property type="project" value="MGI"/>
</dbReference>
<dbReference type="GO" id="GO:0003723">
    <property type="term" value="F:RNA binding"/>
    <property type="evidence" value="ECO:0007669"/>
    <property type="project" value="UniProtKB-KW"/>
</dbReference>
<dbReference type="GO" id="GO:0003714">
    <property type="term" value="F:transcription corepressor activity"/>
    <property type="evidence" value="ECO:0000266"/>
    <property type="project" value="MGI"/>
</dbReference>
<dbReference type="GO" id="GO:0031625">
    <property type="term" value="F:ubiquitin protein ligase binding"/>
    <property type="evidence" value="ECO:0007669"/>
    <property type="project" value="Ensembl"/>
</dbReference>
<dbReference type="GO" id="GO:0043066">
    <property type="term" value="P:negative regulation of apoptotic process"/>
    <property type="evidence" value="ECO:0000250"/>
    <property type="project" value="UniProtKB"/>
</dbReference>
<dbReference type="GO" id="GO:0045892">
    <property type="term" value="P:negative regulation of DNA-templated transcription"/>
    <property type="evidence" value="ECO:0000266"/>
    <property type="project" value="MGI"/>
</dbReference>
<dbReference type="GO" id="GO:0045597">
    <property type="term" value="P:positive regulation of cell differentiation"/>
    <property type="evidence" value="ECO:0000250"/>
    <property type="project" value="UniProtKB"/>
</dbReference>
<dbReference type="GO" id="GO:0006417">
    <property type="term" value="P:regulation of translation"/>
    <property type="evidence" value="ECO:0007669"/>
    <property type="project" value="UniProtKB-KW"/>
</dbReference>
<dbReference type="GO" id="GO:0006364">
    <property type="term" value="P:rRNA processing"/>
    <property type="evidence" value="ECO:0007669"/>
    <property type="project" value="UniProtKB-KW"/>
</dbReference>
<dbReference type="CDD" id="cd01089">
    <property type="entry name" value="PA2G4-like"/>
    <property type="match status" value="1"/>
</dbReference>
<dbReference type="FunFam" id="1.10.10.10:FF:000029">
    <property type="entry name" value="Proliferation-associated 2G4, a"/>
    <property type="match status" value="1"/>
</dbReference>
<dbReference type="FunFam" id="3.90.230.10:FF:000008">
    <property type="entry name" value="Proliferation-associated 2G4, b"/>
    <property type="match status" value="1"/>
</dbReference>
<dbReference type="FunFam" id="3.90.230.10:FF:000031">
    <property type="entry name" value="Proliferation-associated 2G4-like protein"/>
    <property type="match status" value="1"/>
</dbReference>
<dbReference type="Gene3D" id="3.90.230.10">
    <property type="entry name" value="Creatinase/methionine aminopeptidase superfamily"/>
    <property type="match status" value="1"/>
</dbReference>
<dbReference type="Gene3D" id="1.10.10.10">
    <property type="entry name" value="Winged helix-like DNA-binding domain superfamily/Winged helix DNA-binding domain"/>
    <property type="match status" value="1"/>
</dbReference>
<dbReference type="InterPro" id="IPR036005">
    <property type="entry name" value="Creatinase/aminopeptidase-like"/>
</dbReference>
<dbReference type="InterPro" id="IPR004545">
    <property type="entry name" value="PA2G4"/>
</dbReference>
<dbReference type="InterPro" id="IPR047113">
    <property type="entry name" value="PA2G4/ARX1"/>
</dbReference>
<dbReference type="InterPro" id="IPR000994">
    <property type="entry name" value="Pept_M24"/>
</dbReference>
<dbReference type="InterPro" id="IPR018349">
    <property type="entry name" value="Pept_M24A_MAP2_BS"/>
</dbReference>
<dbReference type="InterPro" id="IPR036388">
    <property type="entry name" value="WH-like_DNA-bd_sf"/>
</dbReference>
<dbReference type="InterPro" id="IPR036390">
    <property type="entry name" value="WH_DNA-bd_sf"/>
</dbReference>
<dbReference type="NCBIfam" id="TIGR00495">
    <property type="entry name" value="crvDNA_42K"/>
    <property type="match status" value="1"/>
</dbReference>
<dbReference type="PANTHER" id="PTHR10804:SF11">
    <property type="entry name" value="PROLIFERATION-ASSOCIATED PROTEIN 2G4"/>
    <property type="match status" value="1"/>
</dbReference>
<dbReference type="PANTHER" id="PTHR10804">
    <property type="entry name" value="PROTEASE FAMILY M24 METHIONYL AMINOPEPTIDASE, AMINOPEPTIDASE P"/>
    <property type="match status" value="1"/>
</dbReference>
<dbReference type="Pfam" id="PF00557">
    <property type="entry name" value="Peptidase_M24"/>
    <property type="match status" value="1"/>
</dbReference>
<dbReference type="SUPFAM" id="SSF55920">
    <property type="entry name" value="Creatinase/aminopeptidase"/>
    <property type="match status" value="1"/>
</dbReference>
<dbReference type="SUPFAM" id="SSF46785">
    <property type="entry name" value="Winged helix' DNA-binding domain"/>
    <property type="match status" value="1"/>
</dbReference>
<dbReference type="PROSITE" id="PS01202">
    <property type="entry name" value="MAP_2"/>
    <property type="match status" value="1"/>
</dbReference>
<proteinExistence type="evidence at protein level"/>
<organism>
    <name type="scientific">Mus musculus</name>
    <name type="common">Mouse</name>
    <dbReference type="NCBI Taxonomy" id="10090"/>
    <lineage>
        <taxon>Eukaryota</taxon>
        <taxon>Metazoa</taxon>
        <taxon>Chordata</taxon>
        <taxon>Craniata</taxon>
        <taxon>Vertebrata</taxon>
        <taxon>Euteleostomi</taxon>
        <taxon>Mammalia</taxon>
        <taxon>Eutheria</taxon>
        <taxon>Euarchontoglires</taxon>
        <taxon>Glires</taxon>
        <taxon>Rodentia</taxon>
        <taxon>Myomorpha</taxon>
        <taxon>Muroidea</taxon>
        <taxon>Muridae</taxon>
        <taxon>Murinae</taxon>
        <taxon>Mus</taxon>
        <taxon>Mus</taxon>
    </lineage>
</organism>
<name>PA2G4_MOUSE</name>